<name>MTNN_ECOLU</name>
<protein>
    <recommendedName>
        <fullName evidence="1">5'-methylthioadenosine/S-adenosylhomocysteine nucleosidase</fullName>
        <shortName evidence="1">MTA/SAH nucleosidase</shortName>
        <shortName evidence="1">MTAN</shortName>
        <ecNumber evidence="1">3.2.2.9</ecNumber>
    </recommendedName>
    <alternativeName>
        <fullName evidence="1">5'-deoxyadenosine nucleosidase</fullName>
        <shortName evidence="1">DOA nucleosidase</shortName>
        <shortName evidence="1">dAdo nucleosidase</shortName>
    </alternativeName>
    <alternativeName>
        <fullName evidence="1">5'-methylthioadenosine nucleosidase</fullName>
        <shortName evidence="1">MTA nucleosidase</shortName>
    </alternativeName>
    <alternativeName>
        <fullName evidence="1">S-adenosylhomocysteine nucleosidase</fullName>
        <shortName evidence="1">AdoHcy nucleosidase</shortName>
        <shortName evidence="1">SAH nucleosidase</shortName>
        <shortName evidence="1">SRH nucleosidase</shortName>
    </alternativeName>
</protein>
<accession>B7N828</accession>
<sequence>MKIGIIGAMEEEVTLLRDKIENRQTISLGGCEIYTGQLNGTEVALLKSGIGKVAAALGATLLLEHCKPDVIINTGSAGGLAPTLKVGDIVVSDEARYHDADVTAFGYEYGQLPGCPAGFKADDKLIAAAEACIAELNLNAVRGLIVSGDAFINGSVGLAKIRHNFPQAIAVEMEATAIAHVCHNFNVPFVVVRAISDVADQQSHLSFDEFLAVAAKQSSLMVESLVQKLAHG</sequence>
<proteinExistence type="inferred from homology"/>
<reference key="1">
    <citation type="journal article" date="2009" name="PLoS Genet.">
        <title>Organised genome dynamics in the Escherichia coli species results in highly diverse adaptive paths.</title>
        <authorList>
            <person name="Touchon M."/>
            <person name="Hoede C."/>
            <person name="Tenaillon O."/>
            <person name="Barbe V."/>
            <person name="Baeriswyl S."/>
            <person name="Bidet P."/>
            <person name="Bingen E."/>
            <person name="Bonacorsi S."/>
            <person name="Bouchier C."/>
            <person name="Bouvet O."/>
            <person name="Calteau A."/>
            <person name="Chiapello H."/>
            <person name="Clermont O."/>
            <person name="Cruveiller S."/>
            <person name="Danchin A."/>
            <person name="Diard M."/>
            <person name="Dossat C."/>
            <person name="Karoui M.E."/>
            <person name="Frapy E."/>
            <person name="Garry L."/>
            <person name="Ghigo J.M."/>
            <person name="Gilles A.M."/>
            <person name="Johnson J."/>
            <person name="Le Bouguenec C."/>
            <person name="Lescat M."/>
            <person name="Mangenot S."/>
            <person name="Martinez-Jehanne V."/>
            <person name="Matic I."/>
            <person name="Nassif X."/>
            <person name="Oztas S."/>
            <person name="Petit M.A."/>
            <person name="Pichon C."/>
            <person name="Rouy Z."/>
            <person name="Ruf C.S."/>
            <person name="Schneider D."/>
            <person name="Tourret J."/>
            <person name="Vacherie B."/>
            <person name="Vallenet D."/>
            <person name="Medigue C."/>
            <person name="Rocha E.P.C."/>
            <person name="Denamur E."/>
        </authorList>
    </citation>
    <scope>NUCLEOTIDE SEQUENCE [LARGE SCALE GENOMIC DNA]</scope>
    <source>
        <strain>UMN026 / ExPEC</strain>
    </source>
</reference>
<gene>
    <name evidence="1" type="primary">mtnN</name>
    <name type="ordered locus">ECUMN_0157</name>
</gene>
<comment type="function">
    <text evidence="1">Catalyzes the irreversible cleavage of the glycosidic bond in both 5'-methylthioadenosine (MTA) and S-adenosylhomocysteine (SAH/AdoHcy) to adenine and the corresponding thioribose, 5'-methylthioribose and S-ribosylhomocysteine, respectively. Also cleaves 5'-deoxyadenosine, a toxic by-product of radical S-adenosylmethionine (SAM) enzymes, into 5-deoxyribose and adenine. Thus, is required for in vivo function of the radical SAM enzymes biotin synthase and lipoic acid synthase, that are inhibited by 5'-deoxyadenosine accumulation.</text>
</comment>
<comment type="catalytic activity">
    <reaction evidence="1">
        <text>S-adenosyl-L-homocysteine + H2O = S-(5-deoxy-D-ribos-5-yl)-L-homocysteine + adenine</text>
        <dbReference type="Rhea" id="RHEA:17805"/>
        <dbReference type="ChEBI" id="CHEBI:15377"/>
        <dbReference type="ChEBI" id="CHEBI:16708"/>
        <dbReference type="ChEBI" id="CHEBI:57856"/>
        <dbReference type="ChEBI" id="CHEBI:58195"/>
        <dbReference type="EC" id="3.2.2.9"/>
    </reaction>
</comment>
<comment type="catalytic activity">
    <reaction evidence="1">
        <text>S-methyl-5'-thioadenosine + H2O = 5-(methylsulfanyl)-D-ribose + adenine</text>
        <dbReference type="Rhea" id="RHEA:13617"/>
        <dbReference type="ChEBI" id="CHEBI:15377"/>
        <dbReference type="ChEBI" id="CHEBI:16708"/>
        <dbReference type="ChEBI" id="CHEBI:17509"/>
        <dbReference type="ChEBI" id="CHEBI:78440"/>
        <dbReference type="EC" id="3.2.2.9"/>
    </reaction>
</comment>
<comment type="catalytic activity">
    <reaction evidence="1">
        <text>5'-deoxyadenosine + H2O = 5-deoxy-D-ribose + adenine</text>
        <dbReference type="Rhea" id="RHEA:29859"/>
        <dbReference type="ChEBI" id="CHEBI:15377"/>
        <dbReference type="ChEBI" id="CHEBI:16708"/>
        <dbReference type="ChEBI" id="CHEBI:17319"/>
        <dbReference type="ChEBI" id="CHEBI:149540"/>
        <dbReference type="EC" id="3.2.2.9"/>
    </reaction>
    <physiologicalReaction direction="left-to-right" evidence="1">
        <dbReference type="Rhea" id="RHEA:29860"/>
    </physiologicalReaction>
</comment>
<comment type="pathway">
    <text evidence="1">Amino-acid biosynthesis; L-methionine biosynthesis via salvage pathway; S-methyl-5-thio-alpha-D-ribose 1-phosphate from S-methyl-5'-thioadenosine (hydrolase route): step 1/2.</text>
</comment>
<comment type="subunit">
    <text evidence="1">Homodimer.</text>
</comment>
<comment type="similarity">
    <text evidence="1">Belongs to the PNP/UDP phosphorylase family. MtnN subfamily.</text>
</comment>
<feature type="chain" id="PRO_1000187423" description="5'-methylthioadenosine/S-adenosylhomocysteine nucleosidase">
    <location>
        <begin position="1"/>
        <end position="232"/>
    </location>
</feature>
<feature type="active site" description="Proton acceptor" evidence="1">
    <location>
        <position position="12"/>
    </location>
</feature>
<feature type="active site" description="Proton donor" evidence="1">
    <location>
        <position position="197"/>
    </location>
</feature>
<feature type="binding site" evidence="1">
    <location>
        <position position="78"/>
    </location>
    <ligand>
        <name>substrate</name>
    </ligand>
</feature>
<feature type="binding site" evidence="1">
    <location>
        <position position="152"/>
    </location>
    <ligand>
        <name>substrate</name>
    </ligand>
</feature>
<feature type="binding site" evidence="1">
    <location>
        <begin position="173"/>
        <end position="174"/>
    </location>
    <ligand>
        <name>substrate</name>
    </ligand>
</feature>
<organism>
    <name type="scientific">Escherichia coli O17:K52:H18 (strain UMN026 / ExPEC)</name>
    <dbReference type="NCBI Taxonomy" id="585056"/>
    <lineage>
        <taxon>Bacteria</taxon>
        <taxon>Pseudomonadati</taxon>
        <taxon>Pseudomonadota</taxon>
        <taxon>Gammaproteobacteria</taxon>
        <taxon>Enterobacterales</taxon>
        <taxon>Enterobacteriaceae</taxon>
        <taxon>Escherichia</taxon>
    </lineage>
</organism>
<dbReference type="EC" id="3.2.2.9" evidence="1"/>
<dbReference type="EMBL" id="CU928163">
    <property type="protein sequence ID" value="CAR11378.1"/>
    <property type="molecule type" value="Genomic_DNA"/>
</dbReference>
<dbReference type="RefSeq" id="WP_000689844.1">
    <property type="nucleotide sequence ID" value="NC_011751.1"/>
</dbReference>
<dbReference type="RefSeq" id="YP_002410934.1">
    <property type="nucleotide sequence ID" value="NC_011751.1"/>
</dbReference>
<dbReference type="SMR" id="B7N828"/>
<dbReference type="STRING" id="585056.ECUMN_0157"/>
<dbReference type="GeneID" id="93777267"/>
<dbReference type="KEGG" id="eum:ECUMN_0157"/>
<dbReference type="PATRIC" id="fig|585056.7.peg.350"/>
<dbReference type="HOGENOM" id="CLU_031248_2_2_6"/>
<dbReference type="UniPathway" id="UPA00904">
    <property type="reaction ID" value="UER00871"/>
</dbReference>
<dbReference type="Proteomes" id="UP000007097">
    <property type="component" value="Chromosome"/>
</dbReference>
<dbReference type="GO" id="GO:0005829">
    <property type="term" value="C:cytosol"/>
    <property type="evidence" value="ECO:0007669"/>
    <property type="project" value="TreeGrafter"/>
</dbReference>
<dbReference type="GO" id="GO:0008782">
    <property type="term" value="F:adenosylhomocysteine nucleosidase activity"/>
    <property type="evidence" value="ECO:0007669"/>
    <property type="project" value="UniProtKB-UniRule"/>
</dbReference>
<dbReference type="GO" id="GO:0008930">
    <property type="term" value="F:methylthioadenosine nucleosidase activity"/>
    <property type="evidence" value="ECO:0007669"/>
    <property type="project" value="UniProtKB-UniRule"/>
</dbReference>
<dbReference type="GO" id="GO:0019509">
    <property type="term" value="P:L-methionine salvage from methylthioadenosine"/>
    <property type="evidence" value="ECO:0007669"/>
    <property type="project" value="UniProtKB-UniRule"/>
</dbReference>
<dbReference type="GO" id="GO:0019284">
    <property type="term" value="P:L-methionine salvage from S-adenosylmethionine"/>
    <property type="evidence" value="ECO:0007669"/>
    <property type="project" value="TreeGrafter"/>
</dbReference>
<dbReference type="GO" id="GO:0046124">
    <property type="term" value="P:purine deoxyribonucleoside catabolic process"/>
    <property type="evidence" value="ECO:0007669"/>
    <property type="project" value="UniProtKB-UniRule"/>
</dbReference>
<dbReference type="CDD" id="cd09008">
    <property type="entry name" value="MTAN"/>
    <property type="match status" value="1"/>
</dbReference>
<dbReference type="FunFam" id="3.40.50.1580:FF:000001">
    <property type="entry name" value="MTA/SAH nucleosidase family protein"/>
    <property type="match status" value="1"/>
</dbReference>
<dbReference type="Gene3D" id="3.40.50.1580">
    <property type="entry name" value="Nucleoside phosphorylase domain"/>
    <property type="match status" value="1"/>
</dbReference>
<dbReference type="HAMAP" id="MF_01684">
    <property type="entry name" value="Salvage_MtnN"/>
    <property type="match status" value="1"/>
</dbReference>
<dbReference type="InterPro" id="IPR010049">
    <property type="entry name" value="MTA_SAH_Nsdase"/>
</dbReference>
<dbReference type="InterPro" id="IPR000845">
    <property type="entry name" value="Nucleoside_phosphorylase_d"/>
</dbReference>
<dbReference type="InterPro" id="IPR035994">
    <property type="entry name" value="Nucleoside_phosphorylase_sf"/>
</dbReference>
<dbReference type="NCBIfam" id="TIGR01704">
    <property type="entry name" value="MTA_SAH-Nsdase"/>
    <property type="match status" value="1"/>
</dbReference>
<dbReference type="NCBIfam" id="NF004079">
    <property type="entry name" value="PRK05584.1"/>
    <property type="match status" value="1"/>
</dbReference>
<dbReference type="PANTHER" id="PTHR46832">
    <property type="entry name" value="5'-METHYLTHIOADENOSINE/S-ADENOSYLHOMOCYSTEINE NUCLEOSIDASE"/>
    <property type="match status" value="1"/>
</dbReference>
<dbReference type="PANTHER" id="PTHR46832:SF1">
    <property type="entry name" value="5'-METHYLTHIOADENOSINE_S-ADENOSYLHOMOCYSTEINE NUCLEOSIDASE"/>
    <property type="match status" value="1"/>
</dbReference>
<dbReference type="Pfam" id="PF01048">
    <property type="entry name" value="PNP_UDP_1"/>
    <property type="match status" value="1"/>
</dbReference>
<dbReference type="SUPFAM" id="SSF53167">
    <property type="entry name" value="Purine and uridine phosphorylases"/>
    <property type="match status" value="1"/>
</dbReference>
<evidence type="ECO:0000255" key="1">
    <source>
        <dbReference type="HAMAP-Rule" id="MF_01684"/>
    </source>
</evidence>
<keyword id="KW-0028">Amino-acid biosynthesis</keyword>
<keyword id="KW-0378">Hydrolase</keyword>
<keyword id="KW-0486">Methionine biosynthesis</keyword>